<evidence type="ECO:0000255" key="1">
    <source>
        <dbReference type="HAMAP-Rule" id="MF_01387"/>
    </source>
</evidence>
<keyword id="KW-0158">Chromosome</keyword>
<keyword id="KW-0963">Cytoplasm</keyword>
<keyword id="KW-0238">DNA-binding</keyword>
<keyword id="KW-0488">Methylation</keyword>
<keyword id="KW-1185">Reference proteome</keyword>
<feature type="chain" id="PRO_0000345179" description="Chromatin protein Cren7">
    <location>
        <begin position="1"/>
        <end position="61"/>
    </location>
</feature>
<dbReference type="EMBL" id="BA000023">
    <property type="protein sequence ID" value="BAK54515.1"/>
    <property type="molecule type" value="Genomic_DNA"/>
</dbReference>
<dbReference type="SMR" id="P0C836"/>
<dbReference type="STRING" id="273063.STK_12995"/>
<dbReference type="KEGG" id="sto:STK_12995"/>
<dbReference type="PATRIC" id="fig|273063.9.peg.1461"/>
<dbReference type="eggNOG" id="arCOG04114">
    <property type="taxonomic scope" value="Archaea"/>
</dbReference>
<dbReference type="Proteomes" id="UP000001015">
    <property type="component" value="Chromosome"/>
</dbReference>
<dbReference type="GO" id="GO:0005694">
    <property type="term" value="C:chromosome"/>
    <property type="evidence" value="ECO:0007669"/>
    <property type="project" value="UniProtKB-SubCell"/>
</dbReference>
<dbReference type="GO" id="GO:0005737">
    <property type="term" value="C:cytoplasm"/>
    <property type="evidence" value="ECO:0007669"/>
    <property type="project" value="UniProtKB-SubCell"/>
</dbReference>
<dbReference type="GO" id="GO:0003690">
    <property type="term" value="F:double-stranded DNA binding"/>
    <property type="evidence" value="ECO:0007669"/>
    <property type="project" value="UniProtKB-UniRule"/>
</dbReference>
<dbReference type="Gene3D" id="2.30.30.610">
    <property type="entry name" value="Chromatin protein Cren7"/>
    <property type="match status" value="1"/>
</dbReference>
<dbReference type="HAMAP" id="MF_01387">
    <property type="entry name" value="Chromatin_Cren7"/>
    <property type="match status" value="1"/>
</dbReference>
<dbReference type="InterPro" id="IPR038647">
    <property type="entry name" value="Cren7_sf"/>
</dbReference>
<dbReference type="InterPro" id="IPR020906">
    <property type="entry name" value="dsDNA-bd_Cren7"/>
</dbReference>
<dbReference type="Pfam" id="PF11520">
    <property type="entry name" value="Cren7"/>
    <property type="match status" value="1"/>
</dbReference>
<reference key="1">
    <citation type="journal article" date="2001" name="DNA Res.">
        <title>Complete genome sequence of an aerobic thermoacidophilic Crenarchaeon, Sulfolobus tokodaii strain7.</title>
        <authorList>
            <person name="Kawarabayasi Y."/>
            <person name="Hino Y."/>
            <person name="Horikawa H."/>
            <person name="Jin-no K."/>
            <person name="Takahashi M."/>
            <person name="Sekine M."/>
            <person name="Baba S."/>
            <person name="Ankai A."/>
            <person name="Kosugi H."/>
            <person name="Hosoyama A."/>
            <person name="Fukui S."/>
            <person name="Nagai Y."/>
            <person name="Nishijima K."/>
            <person name="Otsuka R."/>
            <person name="Nakazawa H."/>
            <person name="Takamiya M."/>
            <person name="Kato Y."/>
            <person name="Yoshizawa T."/>
            <person name="Tanaka T."/>
            <person name="Kudoh Y."/>
            <person name="Yamazaki J."/>
            <person name="Kushida N."/>
            <person name="Oguchi A."/>
            <person name="Aoki K."/>
            <person name="Masuda S."/>
            <person name="Yanagii M."/>
            <person name="Nishimura M."/>
            <person name="Yamagishi A."/>
            <person name="Oshima T."/>
            <person name="Kikuchi H."/>
        </authorList>
    </citation>
    <scope>NUCLEOTIDE SEQUENCE [LARGE SCALE GENOMIC DNA]</scope>
    <source>
        <strain>DSM 16993 / JCM 10545 / NBRC 100140 / 7</strain>
    </source>
</reference>
<proteinExistence type="inferred from homology"/>
<comment type="function">
    <text evidence="1">A chromatin protein, binds double-stranded DNA without sequence specificity. Constrains negative DNA supercoils.</text>
</comment>
<comment type="subunit">
    <text evidence="1">Monomer.</text>
</comment>
<comment type="subcellular location">
    <subcellularLocation>
        <location evidence="1">Chromosome</location>
    </subcellularLocation>
    <subcellularLocation>
        <location evidence="1">Cytoplasm</location>
    </subcellularLocation>
</comment>
<comment type="PTM">
    <text evidence="1">Methylated at multiple sites, to varying extents.</text>
</comment>
<comment type="similarity">
    <text evidence="1">Belongs to the Cren7 family.</text>
</comment>
<protein>
    <recommendedName>
        <fullName evidence="1">Chromatin protein Cren7</fullName>
    </recommendedName>
</protein>
<organism>
    <name type="scientific">Sulfurisphaera tokodaii (strain DSM 16993 / JCM 10545 / NBRC 100140 / 7)</name>
    <name type="common">Sulfolobus tokodaii</name>
    <dbReference type="NCBI Taxonomy" id="273063"/>
    <lineage>
        <taxon>Archaea</taxon>
        <taxon>Thermoproteota</taxon>
        <taxon>Thermoprotei</taxon>
        <taxon>Sulfolobales</taxon>
        <taxon>Sulfolobaceae</taxon>
        <taxon>Sulfurisphaera</taxon>
    </lineage>
</organism>
<name>CREN7_SULTO</name>
<sequence>MIGMAEKKVKVKTPSGKEAELAPEKVWVLAPKGRKGVKIGLFKDPETGKYFRHKLPDDYPV</sequence>
<gene>
    <name type="primary">cren7</name>
    <name type="ordered locus">STK_12995</name>
</gene>
<accession>P0C836</accession>
<accession>F9VP07</accession>